<geneLocation type="mitochondrion"/>
<keyword id="KW-0249">Electron transport</keyword>
<keyword id="KW-0472">Membrane</keyword>
<keyword id="KW-0496">Mitochondrion</keyword>
<keyword id="KW-0999">Mitochondrion inner membrane</keyword>
<keyword id="KW-0520">NAD</keyword>
<keyword id="KW-0679">Respiratory chain</keyword>
<keyword id="KW-1278">Translocase</keyword>
<keyword id="KW-0812">Transmembrane</keyword>
<keyword id="KW-1133">Transmembrane helix</keyword>
<keyword id="KW-0813">Transport</keyword>
<keyword id="KW-0830">Ubiquinone</keyword>
<comment type="function">
    <text evidence="1">Core subunit of the mitochondrial membrane respiratory chain NADH dehydrogenase (Complex I) that is believed to belong to the minimal assembly required for catalysis. Complex I functions in the transfer of electrons from NADH to the respiratory chain. The immediate electron acceptor for the enzyme is believed to be ubiquinone (By similarity).</text>
</comment>
<comment type="catalytic activity">
    <reaction>
        <text>a ubiquinone + NADH + 5 H(+)(in) = a ubiquinol + NAD(+) + 4 H(+)(out)</text>
        <dbReference type="Rhea" id="RHEA:29091"/>
        <dbReference type="Rhea" id="RHEA-COMP:9565"/>
        <dbReference type="Rhea" id="RHEA-COMP:9566"/>
        <dbReference type="ChEBI" id="CHEBI:15378"/>
        <dbReference type="ChEBI" id="CHEBI:16389"/>
        <dbReference type="ChEBI" id="CHEBI:17976"/>
        <dbReference type="ChEBI" id="CHEBI:57540"/>
        <dbReference type="ChEBI" id="CHEBI:57945"/>
        <dbReference type="EC" id="7.1.1.2"/>
    </reaction>
</comment>
<comment type="subcellular location">
    <subcellularLocation>
        <location evidence="1">Mitochondrion inner membrane</location>
        <topology evidence="1">Multi-pass membrane protein</topology>
    </subcellularLocation>
</comment>
<comment type="similarity">
    <text evidence="3">Belongs to the complex I subunit 1 family.</text>
</comment>
<dbReference type="EC" id="7.1.1.2"/>
<dbReference type="EMBL" id="U36784">
    <property type="protein sequence ID" value="AAC47100.1"/>
    <property type="molecule type" value="Genomic_DNA"/>
</dbReference>
<dbReference type="EMBL" id="AF000023">
    <property type="protein sequence ID" value="AAC04636.1"/>
    <property type="molecule type" value="Genomic_DNA"/>
</dbReference>
<dbReference type="PIR" id="T11890">
    <property type="entry name" value="T11890"/>
</dbReference>
<dbReference type="RefSeq" id="NP_009259.2">
    <property type="nucleotide sequence ID" value="NC_000933.1"/>
</dbReference>
<dbReference type="SMR" id="Q37556"/>
<dbReference type="GeneID" id="808774"/>
<dbReference type="CTD" id="4535"/>
<dbReference type="GO" id="GO:0005743">
    <property type="term" value="C:mitochondrial inner membrane"/>
    <property type="evidence" value="ECO:0007669"/>
    <property type="project" value="UniProtKB-SubCell"/>
</dbReference>
<dbReference type="GO" id="GO:0008137">
    <property type="term" value="F:NADH dehydrogenase (ubiquinone) activity"/>
    <property type="evidence" value="ECO:0007669"/>
    <property type="project" value="UniProtKB-EC"/>
</dbReference>
<dbReference type="GO" id="GO:0009060">
    <property type="term" value="P:aerobic respiration"/>
    <property type="evidence" value="ECO:0007669"/>
    <property type="project" value="TreeGrafter"/>
</dbReference>
<dbReference type="HAMAP" id="MF_01350">
    <property type="entry name" value="NDH1_NuoH"/>
    <property type="match status" value="1"/>
</dbReference>
<dbReference type="InterPro" id="IPR001694">
    <property type="entry name" value="NADH_UbQ_OxRdtase_su1/FPO"/>
</dbReference>
<dbReference type="InterPro" id="IPR018086">
    <property type="entry name" value="NADH_UbQ_OxRdtase_su1_CS"/>
</dbReference>
<dbReference type="NCBIfam" id="NF004741">
    <property type="entry name" value="PRK06076.1-2"/>
    <property type="match status" value="1"/>
</dbReference>
<dbReference type="PANTHER" id="PTHR11432">
    <property type="entry name" value="NADH DEHYDROGENASE SUBUNIT 1"/>
    <property type="match status" value="1"/>
</dbReference>
<dbReference type="PANTHER" id="PTHR11432:SF3">
    <property type="entry name" value="NADH-UBIQUINONE OXIDOREDUCTASE CHAIN 1"/>
    <property type="match status" value="1"/>
</dbReference>
<dbReference type="Pfam" id="PF00146">
    <property type="entry name" value="NADHdh"/>
    <property type="match status" value="1"/>
</dbReference>
<dbReference type="PROSITE" id="PS00667">
    <property type="entry name" value="COMPLEX1_ND1_1"/>
    <property type="match status" value="1"/>
</dbReference>
<dbReference type="PROSITE" id="PS00668">
    <property type="entry name" value="COMPLEX1_ND1_2"/>
    <property type="match status" value="1"/>
</dbReference>
<gene>
    <name type="primary">ND1</name>
</gene>
<evidence type="ECO:0000250" key="1"/>
<evidence type="ECO:0000255" key="2"/>
<evidence type="ECO:0000305" key="3"/>
<feature type="chain" id="PRO_0000117429" description="NADH-ubiquinone oxidoreductase chain 1">
    <location>
        <begin position="1"/>
        <end position="334"/>
    </location>
</feature>
<feature type="transmembrane region" description="Helical" evidence="2">
    <location>
        <begin position="4"/>
        <end position="24"/>
    </location>
</feature>
<feature type="transmembrane region" description="Helical" evidence="2">
    <location>
        <begin position="82"/>
        <end position="102"/>
    </location>
</feature>
<feature type="transmembrane region" description="Helical" evidence="2">
    <location>
        <begin position="115"/>
        <end position="135"/>
    </location>
</feature>
<feature type="transmembrane region" description="Helical" evidence="2">
    <location>
        <begin position="161"/>
        <end position="181"/>
    </location>
</feature>
<feature type="transmembrane region" description="Helical" evidence="2">
    <location>
        <begin position="187"/>
        <end position="207"/>
    </location>
</feature>
<feature type="transmembrane region" description="Helical" evidence="2">
    <location>
        <begin position="222"/>
        <end position="242"/>
    </location>
</feature>
<feature type="transmembrane region" description="Helical" evidence="2">
    <location>
        <begin position="247"/>
        <end position="267"/>
    </location>
</feature>
<feature type="transmembrane region" description="Helical" evidence="2">
    <location>
        <begin position="268"/>
        <end position="288"/>
    </location>
</feature>
<feature type="transmembrane region" description="Helical" evidence="2">
    <location>
        <begin position="311"/>
        <end position="331"/>
    </location>
</feature>
<organism>
    <name type="scientific">Metridium senile</name>
    <name type="common">Brown sea anemone</name>
    <name type="synonym">Frilled sea anemone</name>
    <dbReference type="NCBI Taxonomy" id="6116"/>
    <lineage>
        <taxon>Eukaryota</taxon>
        <taxon>Metazoa</taxon>
        <taxon>Cnidaria</taxon>
        <taxon>Anthozoa</taxon>
        <taxon>Hexacorallia</taxon>
        <taxon>Actiniaria</taxon>
        <taxon>Nynantheae</taxon>
        <taxon>Metridiidae</taxon>
        <taxon>Metridium</taxon>
    </lineage>
</organism>
<reference key="1">
    <citation type="journal article" date="1996" name="Proc. Natl. Acad. Sci. U.S.A.">
        <title>Two mitochondrial group I introns in a metazoan, the sea anemone Metridium senile: one intron contains genes for subunits 1 and 3 of NADH dehydrogenase.</title>
        <authorList>
            <person name="Beagley C.T."/>
            <person name="Okada N.A."/>
            <person name="Wolstenholme D.R."/>
        </authorList>
    </citation>
    <scope>NUCLEOTIDE SEQUENCE [GENOMIC DNA]</scope>
    <source>
        <strain>White morph</strain>
    </source>
</reference>
<reference key="2">
    <citation type="submission" date="1997-04" db="EMBL/GenBank/DDBJ databases">
        <authorList>
            <person name="Beagley C.T."/>
            <person name="Okimoto R."/>
            <person name="Wolstenholme D.R."/>
        </authorList>
    </citation>
    <scope>NUCLEOTIDE SEQUENCE [GENOMIC DNA]</scope>
    <source>
        <strain>White morph</strain>
    </source>
</reference>
<accession>Q37556</accession>
<proteinExistence type="inferred from homology"/>
<protein>
    <recommendedName>
        <fullName>NADH-ubiquinone oxidoreductase chain 1</fullName>
        <ecNumber>7.1.1.2</ecNumber>
    </recommendedName>
    <alternativeName>
        <fullName>NADH dehydrogenase subunit 1</fullName>
    </alternativeName>
</protein>
<name>NU1M_METSE</name>
<sequence>MRKFVFLMIIETIHIILKILIIVIPLLVAVAYLTLAERKVLGYMQARKGPNVVGVYGLLQPLADGIKLFTKELVIPHYANLFIYVAAPVLSFTLALIAWGVIPYDKGVVISDLKIGILFTLAVSSISVYAILMSGWASQSKYAFLGAIRAAAQMISYEVSIGLIIITVILCVGSLNITEIVLAQSSGIWFFFPLFPVAMMFFASALAETNRAPFDLTEGESELVSGYNVEYASMSFALFFLAEYAHIILMSCLTTILFLGGWLSPIVFFKGGPAWFGLKTSFIILLFIWVRASFPRMRYDQLMALLWKSYLPLSLAFVVLVASLLFGLNGLPPS</sequence>